<accession>Q5HRL4</accession>
<dbReference type="EMBL" id="CP000029">
    <property type="protein sequence ID" value="AAW53576.1"/>
    <property type="molecule type" value="Genomic_DNA"/>
</dbReference>
<dbReference type="RefSeq" id="WP_001832314.1">
    <property type="nucleotide sequence ID" value="NC_002976.3"/>
</dbReference>
<dbReference type="SMR" id="Q5HRL4"/>
<dbReference type="STRING" id="176279.SERP0179"/>
<dbReference type="GeneID" id="50019533"/>
<dbReference type="KEGG" id="ser:SERP0179"/>
<dbReference type="eggNOG" id="COG0081">
    <property type="taxonomic scope" value="Bacteria"/>
</dbReference>
<dbReference type="HOGENOM" id="CLU_062853_0_0_9"/>
<dbReference type="Proteomes" id="UP000000531">
    <property type="component" value="Chromosome"/>
</dbReference>
<dbReference type="GO" id="GO:0015934">
    <property type="term" value="C:large ribosomal subunit"/>
    <property type="evidence" value="ECO:0007669"/>
    <property type="project" value="InterPro"/>
</dbReference>
<dbReference type="GO" id="GO:0019843">
    <property type="term" value="F:rRNA binding"/>
    <property type="evidence" value="ECO:0007669"/>
    <property type="project" value="UniProtKB-UniRule"/>
</dbReference>
<dbReference type="GO" id="GO:0003735">
    <property type="term" value="F:structural constituent of ribosome"/>
    <property type="evidence" value="ECO:0007669"/>
    <property type="project" value="InterPro"/>
</dbReference>
<dbReference type="GO" id="GO:0000049">
    <property type="term" value="F:tRNA binding"/>
    <property type="evidence" value="ECO:0007669"/>
    <property type="project" value="UniProtKB-KW"/>
</dbReference>
<dbReference type="GO" id="GO:0006417">
    <property type="term" value="P:regulation of translation"/>
    <property type="evidence" value="ECO:0007669"/>
    <property type="project" value="UniProtKB-KW"/>
</dbReference>
<dbReference type="GO" id="GO:0006412">
    <property type="term" value="P:translation"/>
    <property type="evidence" value="ECO:0007669"/>
    <property type="project" value="UniProtKB-UniRule"/>
</dbReference>
<dbReference type="CDD" id="cd00403">
    <property type="entry name" value="Ribosomal_L1"/>
    <property type="match status" value="1"/>
</dbReference>
<dbReference type="FunFam" id="3.40.50.790:FF:000001">
    <property type="entry name" value="50S ribosomal protein L1"/>
    <property type="match status" value="1"/>
</dbReference>
<dbReference type="Gene3D" id="3.30.190.20">
    <property type="match status" value="1"/>
</dbReference>
<dbReference type="Gene3D" id="3.40.50.790">
    <property type="match status" value="1"/>
</dbReference>
<dbReference type="HAMAP" id="MF_01318_B">
    <property type="entry name" value="Ribosomal_uL1_B"/>
    <property type="match status" value="1"/>
</dbReference>
<dbReference type="InterPro" id="IPR005878">
    <property type="entry name" value="Ribosom_uL1_bac-type"/>
</dbReference>
<dbReference type="InterPro" id="IPR002143">
    <property type="entry name" value="Ribosomal_uL1"/>
</dbReference>
<dbReference type="InterPro" id="IPR023674">
    <property type="entry name" value="Ribosomal_uL1-like"/>
</dbReference>
<dbReference type="InterPro" id="IPR028364">
    <property type="entry name" value="Ribosomal_uL1/biogenesis"/>
</dbReference>
<dbReference type="InterPro" id="IPR016095">
    <property type="entry name" value="Ribosomal_uL1_3-a/b-sand"/>
</dbReference>
<dbReference type="InterPro" id="IPR023673">
    <property type="entry name" value="Ribosomal_uL1_CS"/>
</dbReference>
<dbReference type="NCBIfam" id="TIGR01169">
    <property type="entry name" value="rplA_bact"/>
    <property type="match status" value="1"/>
</dbReference>
<dbReference type="PANTHER" id="PTHR36427">
    <property type="entry name" value="54S RIBOSOMAL PROTEIN L1, MITOCHONDRIAL"/>
    <property type="match status" value="1"/>
</dbReference>
<dbReference type="PANTHER" id="PTHR36427:SF3">
    <property type="entry name" value="LARGE RIBOSOMAL SUBUNIT PROTEIN UL1M"/>
    <property type="match status" value="1"/>
</dbReference>
<dbReference type="Pfam" id="PF00687">
    <property type="entry name" value="Ribosomal_L1"/>
    <property type="match status" value="1"/>
</dbReference>
<dbReference type="PIRSF" id="PIRSF002155">
    <property type="entry name" value="Ribosomal_L1"/>
    <property type="match status" value="1"/>
</dbReference>
<dbReference type="SUPFAM" id="SSF56808">
    <property type="entry name" value="Ribosomal protein L1"/>
    <property type="match status" value="1"/>
</dbReference>
<dbReference type="PROSITE" id="PS01199">
    <property type="entry name" value="RIBOSOMAL_L1"/>
    <property type="match status" value="1"/>
</dbReference>
<protein>
    <recommendedName>
        <fullName evidence="1">Large ribosomal subunit protein uL1</fullName>
    </recommendedName>
    <alternativeName>
        <fullName evidence="2">50S ribosomal protein L1</fullName>
    </alternativeName>
</protein>
<keyword id="KW-1185">Reference proteome</keyword>
<keyword id="KW-0678">Repressor</keyword>
<keyword id="KW-0687">Ribonucleoprotein</keyword>
<keyword id="KW-0689">Ribosomal protein</keyword>
<keyword id="KW-0694">RNA-binding</keyword>
<keyword id="KW-0699">rRNA-binding</keyword>
<keyword id="KW-0810">Translation regulation</keyword>
<keyword id="KW-0820">tRNA-binding</keyword>
<name>RL1_STAEQ</name>
<sequence length="231" mass="25028">MAKKGKKYQEAASKVDRTQYYSVEEAIKLAKETSVANFDASVEVAFRLGIDTRKNDQQIRGAVVLPHGTGKSQRVLVFAKGDKITEAEEAGADYVGEADYVQKIQQGWFDFDVVVATPDMMGEVGKLGRVLGPKGLMPNPKTGTVTMDVKKAVEEIKAGKVEYRAEKAGIVHASIGKVSFDEEKLVDNFRTLQDVLAKAKPASAKGTYFKSVAVTTTMGPGVKVDTSSFKL</sequence>
<feature type="chain" id="PRO_0000125738" description="Large ribosomal subunit protein uL1">
    <location>
        <begin position="1"/>
        <end position="231"/>
    </location>
</feature>
<organism>
    <name type="scientific">Staphylococcus epidermidis (strain ATCC 35984 / DSM 28319 / BCRC 17069 / CCUG 31568 / BM 3577 / RP62A)</name>
    <dbReference type="NCBI Taxonomy" id="176279"/>
    <lineage>
        <taxon>Bacteria</taxon>
        <taxon>Bacillati</taxon>
        <taxon>Bacillota</taxon>
        <taxon>Bacilli</taxon>
        <taxon>Bacillales</taxon>
        <taxon>Staphylococcaceae</taxon>
        <taxon>Staphylococcus</taxon>
    </lineage>
</organism>
<evidence type="ECO:0000255" key="1">
    <source>
        <dbReference type="HAMAP-Rule" id="MF_01318"/>
    </source>
</evidence>
<evidence type="ECO:0000305" key="2"/>
<proteinExistence type="inferred from homology"/>
<comment type="function">
    <text evidence="1">Binds directly to 23S rRNA. The L1 stalk is quite mobile in the ribosome, and is involved in E site tRNA release.</text>
</comment>
<comment type="function">
    <text evidence="1">Protein L1 is also a translational repressor protein, it controls the translation of the L11 operon by binding to its mRNA.</text>
</comment>
<comment type="subunit">
    <text evidence="1">Part of the 50S ribosomal subunit.</text>
</comment>
<comment type="similarity">
    <text evidence="1">Belongs to the universal ribosomal protein uL1 family.</text>
</comment>
<gene>
    <name evidence="1" type="primary">rplA</name>
    <name type="ordered locus">SERP0179</name>
</gene>
<reference key="1">
    <citation type="journal article" date="2005" name="J. Bacteriol.">
        <title>Insights on evolution of virulence and resistance from the complete genome analysis of an early methicillin-resistant Staphylococcus aureus strain and a biofilm-producing methicillin-resistant Staphylococcus epidermidis strain.</title>
        <authorList>
            <person name="Gill S.R."/>
            <person name="Fouts D.E."/>
            <person name="Archer G.L."/>
            <person name="Mongodin E.F."/>
            <person name="DeBoy R.T."/>
            <person name="Ravel J."/>
            <person name="Paulsen I.T."/>
            <person name="Kolonay J.F."/>
            <person name="Brinkac L.M."/>
            <person name="Beanan M.J."/>
            <person name="Dodson R.J."/>
            <person name="Daugherty S.C."/>
            <person name="Madupu R."/>
            <person name="Angiuoli S.V."/>
            <person name="Durkin A.S."/>
            <person name="Haft D.H."/>
            <person name="Vamathevan J.J."/>
            <person name="Khouri H."/>
            <person name="Utterback T.R."/>
            <person name="Lee C."/>
            <person name="Dimitrov G."/>
            <person name="Jiang L."/>
            <person name="Qin H."/>
            <person name="Weidman J."/>
            <person name="Tran K."/>
            <person name="Kang K.H."/>
            <person name="Hance I.R."/>
            <person name="Nelson K.E."/>
            <person name="Fraser C.M."/>
        </authorList>
    </citation>
    <scope>NUCLEOTIDE SEQUENCE [LARGE SCALE GENOMIC DNA]</scope>
    <source>
        <strain>ATCC 35984 / DSM 28319 / BCRC 17069 / CCUG 31568 / BM 3577 / RP62A</strain>
    </source>
</reference>